<geneLocation type="plasmid">
    <name>TOL pDK1</name>
</geneLocation>
<proteinExistence type="predicted"/>
<organism>
    <name type="scientific">Pseudomonas putida</name>
    <name type="common">Arthrobacter siderocapsulatus</name>
    <dbReference type="NCBI Taxonomy" id="303"/>
    <lineage>
        <taxon>Bacteria</taxon>
        <taxon>Pseudomonadati</taxon>
        <taxon>Pseudomonadota</taxon>
        <taxon>Gammaproteobacteria</taxon>
        <taxon>Pseudomonadales</taxon>
        <taxon>Pseudomonadaceae</taxon>
        <taxon>Pseudomonas</taxon>
    </lineage>
</organism>
<feature type="chain" id="PRO_0000194605" description="XylDLEGF operon transcriptional activator 1">
    <location>
        <begin position="1"/>
        <end position="331"/>
    </location>
</feature>
<feature type="domain" description="HTH araC/xylS-type" evidence="1">
    <location>
        <begin position="214"/>
        <end position="315"/>
    </location>
</feature>
<feature type="DNA-binding region" description="H-T-H motif" evidence="1">
    <location>
        <begin position="231"/>
        <end position="252"/>
    </location>
</feature>
<feature type="DNA-binding region" description="H-T-H motif" evidence="1">
    <location>
        <begin position="282"/>
        <end position="305"/>
    </location>
</feature>
<comment type="function">
    <text>Regulatory protein of the TOL plasmid xyl operons. XylS activates the xylXYZLTEGFJQKIH operon required for the degradation of toluene, m-xylene and p-xylene.</text>
</comment>
<comment type="subcellular location">
    <subcellularLocation>
        <location>Cytoplasm</location>
    </subcellularLocation>
</comment>
<evidence type="ECO:0000255" key="1">
    <source>
        <dbReference type="PROSITE-ProRule" id="PRU00593"/>
    </source>
</evidence>
<dbReference type="EMBL" id="L02358">
    <property type="protein sequence ID" value="AAA26031.1"/>
    <property type="molecule type" value="Genomic_DNA"/>
</dbReference>
<dbReference type="RefSeq" id="WP_013100939.1">
    <property type="nucleotide sequence ID" value="NC_014124.1"/>
</dbReference>
<dbReference type="RefSeq" id="YP_003617178.1">
    <property type="nucleotide sequence ID" value="NC_014124.1"/>
</dbReference>
<dbReference type="SMR" id="Q04713"/>
<dbReference type="GO" id="GO:0005737">
    <property type="term" value="C:cytoplasm"/>
    <property type="evidence" value="ECO:0007669"/>
    <property type="project" value="UniProtKB-SubCell"/>
</dbReference>
<dbReference type="GO" id="GO:0003700">
    <property type="term" value="F:DNA-binding transcription factor activity"/>
    <property type="evidence" value="ECO:0007669"/>
    <property type="project" value="InterPro"/>
</dbReference>
<dbReference type="GO" id="GO:0043565">
    <property type="term" value="F:sequence-specific DNA binding"/>
    <property type="evidence" value="ECO:0007669"/>
    <property type="project" value="InterPro"/>
</dbReference>
<dbReference type="GO" id="GO:0009056">
    <property type="term" value="P:catabolic process"/>
    <property type="evidence" value="ECO:0007669"/>
    <property type="project" value="UniProtKB-KW"/>
</dbReference>
<dbReference type="GO" id="GO:0009893">
    <property type="term" value="P:positive regulation of metabolic process"/>
    <property type="evidence" value="ECO:0007669"/>
    <property type="project" value="UniProtKB-ARBA"/>
</dbReference>
<dbReference type="Gene3D" id="1.10.10.60">
    <property type="entry name" value="Homeodomain-like"/>
    <property type="match status" value="1"/>
</dbReference>
<dbReference type="InterPro" id="IPR035418">
    <property type="entry name" value="AraC-bd_2"/>
</dbReference>
<dbReference type="InterPro" id="IPR050204">
    <property type="entry name" value="AraC_XylS_family_regulators"/>
</dbReference>
<dbReference type="InterPro" id="IPR009057">
    <property type="entry name" value="Homeodomain-like_sf"/>
</dbReference>
<dbReference type="InterPro" id="IPR037923">
    <property type="entry name" value="HTH-like"/>
</dbReference>
<dbReference type="InterPro" id="IPR018060">
    <property type="entry name" value="HTH_AraC"/>
</dbReference>
<dbReference type="InterPro" id="IPR018062">
    <property type="entry name" value="HTH_AraC-typ_CS"/>
</dbReference>
<dbReference type="PANTHER" id="PTHR46796:SF6">
    <property type="entry name" value="ARAC SUBFAMILY"/>
    <property type="match status" value="1"/>
</dbReference>
<dbReference type="PANTHER" id="PTHR46796">
    <property type="entry name" value="HTH-TYPE TRANSCRIPTIONAL ACTIVATOR RHAS-RELATED"/>
    <property type="match status" value="1"/>
</dbReference>
<dbReference type="Pfam" id="PF14525">
    <property type="entry name" value="AraC_binding_2"/>
    <property type="match status" value="1"/>
</dbReference>
<dbReference type="Pfam" id="PF12833">
    <property type="entry name" value="HTH_18"/>
    <property type="match status" value="1"/>
</dbReference>
<dbReference type="SMART" id="SM00342">
    <property type="entry name" value="HTH_ARAC"/>
    <property type="match status" value="1"/>
</dbReference>
<dbReference type="SUPFAM" id="SSF46689">
    <property type="entry name" value="Homeodomain-like"/>
    <property type="match status" value="1"/>
</dbReference>
<dbReference type="SUPFAM" id="SSF51215">
    <property type="entry name" value="Regulatory protein AraC"/>
    <property type="match status" value="1"/>
</dbReference>
<dbReference type="PROSITE" id="PS00041">
    <property type="entry name" value="HTH_ARAC_FAMILY_1"/>
    <property type="match status" value="1"/>
</dbReference>
<dbReference type="PROSITE" id="PS01124">
    <property type="entry name" value="HTH_ARAC_FAMILY_2"/>
    <property type="match status" value="1"/>
</dbReference>
<name>XYLS4_PSEPU</name>
<protein>
    <recommendedName>
        <fullName>XylDLEGF operon transcriptional activator 1</fullName>
    </recommendedName>
</protein>
<reference key="1">
    <citation type="journal article" date="1993" name="J. Gen. Microbiol.">
        <title>A comparison of the multiple alleles of xylS carried by TOL plasmids pWW53 and pDK1 and its implications for their evolutionary relationship.</title>
        <authorList>
            <person name="Assinder S.J."/>
            <person name="de Marco P."/>
            <person name="Osborne D.J."/>
            <person name="Poh C.L."/>
            <person name="Shaw L.E."/>
            <person name="Winson M.K."/>
            <person name="Williams P.A."/>
        </authorList>
    </citation>
    <scope>NUCLEOTIDE SEQUENCE [GENOMIC DNA]</scope>
    <source>
        <strain>HS1</strain>
    </source>
</reference>
<gene>
    <name type="primary">xylS1</name>
</gene>
<accession>Q04713</accession>
<sequence>MDFCLLNEKSQIFVHAEPYAVSDYVNQYVGTHSIRLPKGGRPAGRLHHRIFGCLDLCRISYGGSVRVISPGLETCYHLQIILKGHCLWRGYGQEHYFSPGELLLLNPDDQADLTYSEDCEKFIVKLPSVVLDRACSDNNWHKPREGIRFAARHNLQQLDGFINLLGLVCDEAEHTKSMPRVQEHYAGIIASKLLEMLGSNVSREIFSKGNPSFERVVQFIEENLKRNISLERLAELALMSPRSLYTLFEKHAGTTPKNYIRNRKLECIRARLSDPNANVRSVTEMALDYGFFHTGRFAENYRSTFGELPSDTLRRRKMKWLDPEESLPPLP</sequence>
<keyword id="KW-0010">Activator</keyword>
<keyword id="KW-0058">Aromatic hydrocarbons catabolism</keyword>
<keyword id="KW-0963">Cytoplasm</keyword>
<keyword id="KW-0238">DNA-binding</keyword>
<keyword id="KW-0614">Plasmid</keyword>
<keyword id="KW-0804">Transcription</keyword>
<keyword id="KW-0805">Transcription regulation</keyword>